<accession>P17680</accession>
<dbReference type="SMR" id="P17680"/>
<dbReference type="MEROPS" id="I07.017"/>
<dbReference type="GO" id="GO:0005576">
    <property type="term" value="C:extracellular region"/>
    <property type="evidence" value="ECO:0007669"/>
    <property type="project" value="UniProtKB-SubCell"/>
</dbReference>
<dbReference type="GO" id="GO:0004867">
    <property type="term" value="F:serine-type endopeptidase inhibitor activity"/>
    <property type="evidence" value="ECO:0007669"/>
    <property type="project" value="UniProtKB-KW"/>
</dbReference>
<dbReference type="CDD" id="cd00150">
    <property type="entry name" value="PlantTI"/>
    <property type="match status" value="1"/>
</dbReference>
<dbReference type="Gene3D" id="4.10.75.20">
    <property type="match status" value="1"/>
</dbReference>
<dbReference type="InterPro" id="IPR000737">
    <property type="entry name" value="Prot_inh_squash"/>
</dbReference>
<dbReference type="InterPro" id="IPR011052">
    <property type="entry name" value="Proteinase_amylase_inhib_sf"/>
</dbReference>
<dbReference type="Pfam" id="PF00299">
    <property type="entry name" value="Squash"/>
    <property type="match status" value="1"/>
</dbReference>
<dbReference type="PRINTS" id="PR00293">
    <property type="entry name" value="SQUASHINHBTR"/>
</dbReference>
<dbReference type="SMART" id="SM00286">
    <property type="entry name" value="PTI"/>
    <property type="match status" value="1"/>
</dbReference>
<dbReference type="SUPFAM" id="SSF57027">
    <property type="entry name" value="Plant inhibitors of proteinases and amylases"/>
    <property type="match status" value="1"/>
</dbReference>
<dbReference type="PROSITE" id="PS00286">
    <property type="entry name" value="SQUASH_INHIBITOR"/>
    <property type="match status" value="1"/>
</dbReference>
<protein>
    <recommendedName>
        <fullName>Trypsin inhibitor 1</fullName>
    </recommendedName>
    <alternativeName>
        <fullName>MRTI-I</fullName>
    </alternativeName>
    <alternativeName>
        <fullName>Trypsin inhibitor I</fullName>
    </alternativeName>
</protein>
<organism>
    <name type="scientific">Momordica repens</name>
    <dbReference type="NCBI Taxonomy" id="3675"/>
    <lineage>
        <taxon>Eukaryota</taxon>
        <taxon>Viridiplantae</taxon>
        <taxon>Streptophyta</taxon>
        <taxon>Embryophyta</taxon>
        <taxon>Tracheophyta</taxon>
        <taxon>Spermatophyta</taxon>
        <taxon>Magnoliopsida</taxon>
        <taxon>eudicotyledons</taxon>
        <taxon>Gunneridae</taxon>
        <taxon>Pentapetalae</taxon>
        <taxon>rosids</taxon>
        <taxon>fabids</taxon>
        <taxon>Cucurbitales</taxon>
        <taxon>Cucurbitaceae</taxon>
        <taxon>Momordiceae</taxon>
        <taxon>Momordica</taxon>
    </lineage>
</organism>
<comment type="function">
    <text>Inhibits trypsin.</text>
</comment>
<comment type="subcellular location">
    <subcellularLocation>
        <location>Secreted</location>
    </subcellularLocation>
</comment>
<comment type="domain">
    <text evidence="1">The presence of a 'disulfide through disulfide knot' structurally defines this protein as a knottin.</text>
</comment>
<comment type="similarity">
    <text evidence="2">Belongs to the protease inhibitor I7 (squash-type serine protease inhibitor) family.</text>
</comment>
<reference key="1">
    <citation type="journal article" date="1984" name="Phytochemistry">
        <title>Trypsin isoinhibitors from Mormodica repens seeds.</title>
        <authorList>
            <person name="Joubert F.J."/>
        </authorList>
    </citation>
    <scope>PROTEIN SEQUENCE</scope>
    <source>
        <tissue>Seed</tissue>
    </source>
</reference>
<sequence>GICPRILMECKRDSDCLAQCVCKRQGYCG</sequence>
<evidence type="ECO:0000250" key="1"/>
<evidence type="ECO:0000305" key="2"/>
<proteinExistence type="evidence at protein level"/>
<name>ITR1_MOMRE</name>
<keyword id="KW-0903">Direct protein sequencing</keyword>
<keyword id="KW-1015">Disulfide bond</keyword>
<keyword id="KW-0960">Knottin</keyword>
<keyword id="KW-0646">Protease inhibitor</keyword>
<keyword id="KW-0964">Secreted</keyword>
<keyword id="KW-0722">Serine protease inhibitor</keyword>
<feature type="peptide" id="PRO_0000044391" description="Trypsin inhibitor 1">
    <location>
        <begin position="1"/>
        <end position="29"/>
    </location>
</feature>
<feature type="site" description="Reactive bond">
    <location>
        <begin position="5"/>
        <end position="6"/>
    </location>
</feature>
<feature type="disulfide bond" evidence="1">
    <location>
        <begin position="3"/>
        <end position="20"/>
    </location>
</feature>
<feature type="disulfide bond" evidence="1">
    <location>
        <begin position="10"/>
        <end position="22"/>
    </location>
</feature>
<feature type="disulfide bond" evidence="1">
    <location>
        <begin position="16"/>
        <end position="28"/>
    </location>
</feature>